<gene>
    <name type="primary">lprD</name>
    <name type="ordered locus">Rv1343c</name>
    <name type="ORF">MTCY02B10.07c</name>
</gene>
<protein>
    <recommendedName>
        <fullName>Putative lipoprotein LprD</fullName>
    </recommendedName>
</protein>
<sequence>MSTTRRRRPALIALVIIATCGCLALGWWQWTRFQSTSGTFQNLGYALQWPLFAWFCVYAYRNFVRYEETPPQPPTGGAAAEIPAGLLPERPKPAQQPPDDPVLREYNAYLAELAKDDARKQNRTTA</sequence>
<reference key="1">
    <citation type="journal article" date="1998" name="Nature">
        <title>Deciphering the biology of Mycobacterium tuberculosis from the complete genome sequence.</title>
        <authorList>
            <person name="Cole S.T."/>
            <person name="Brosch R."/>
            <person name="Parkhill J."/>
            <person name="Garnier T."/>
            <person name="Churcher C.M."/>
            <person name="Harris D.E."/>
            <person name="Gordon S.V."/>
            <person name="Eiglmeier K."/>
            <person name="Gas S."/>
            <person name="Barry C.E. III"/>
            <person name="Tekaia F."/>
            <person name="Badcock K."/>
            <person name="Basham D."/>
            <person name="Brown D."/>
            <person name="Chillingworth T."/>
            <person name="Connor R."/>
            <person name="Davies R.M."/>
            <person name="Devlin K."/>
            <person name="Feltwell T."/>
            <person name="Gentles S."/>
            <person name="Hamlin N."/>
            <person name="Holroyd S."/>
            <person name="Hornsby T."/>
            <person name="Jagels K."/>
            <person name="Krogh A."/>
            <person name="McLean J."/>
            <person name="Moule S."/>
            <person name="Murphy L.D."/>
            <person name="Oliver S."/>
            <person name="Osborne J."/>
            <person name="Quail M.A."/>
            <person name="Rajandream M.A."/>
            <person name="Rogers J."/>
            <person name="Rutter S."/>
            <person name="Seeger K."/>
            <person name="Skelton S."/>
            <person name="Squares S."/>
            <person name="Squares R."/>
            <person name="Sulston J.E."/>
            <person name="Taylor K."/>
            <person name="Whitehead S."/>
            <person name="Barrell B.G."/>
        </authorList>
    </citation>
    <scope>NUCLEOTIDE SEQUENCE [LARGE SCALE GENOMIC DNA]</scope>
    <source>
        <strain>ATCC 25618 / H37Rv</strain>
    </source>
</reference>
<feature type="signal peptide" evidence="2">
    <location>
        <begin position="1"/>
        <end position="21"/>
    </location>
</feature>
<feature type="chain" id="PRO_0000103817" description="Putative lipoprotein LprD">
    <location>
        <begin position="22"/>
        <end position="126"/>
    </location>
</feature>
<feature type="transmembrane region" description="Helical" evidence="1">
    <location>
        <begin position="40"/>
        <end position="60"/>
    </location>
</feature>
<feature type="region of interest" description="Disordered" evidence="3">
    <location>
        <begin position="70"/>
        <end position="101"/>
    </location>
</feature>
<feature type="lipid moiety-binding region" description="N-palmitoyl cysteine" evidence="2">
    <location>
        <position position="22"/>
    </location>
</feature>
<feature type="lipid moiety-binding region" description="S-diacylglycerol cysteine" evidence="2">
    <location>
        <position position="22"/>
    </location>
</feature>
<dbReference type="EMBL" id="AL123456">
    <property type="protein sequence ID" value="CCP44101.1"/>
    <property type="molecule type" value="Genomic_DNA"/>
</dbReference>
<dbReference type="PIR" id="F70739">
    <property type="entry name" value="F70739"/>
</dbReference>
<dbReference type="RefSeq" id="NP_215859.1">
    <property type="nucleotide sequence ID" value="NC_000962.3"/>
</dbReference>
<dbReference type="RefSeq" id="WP_003898833.1">
    <property type="nucleotide sequence ID" value="NZ_NVQJ01000031.1"/>
</dbReference>
<dbReference type="SMR" id="P9WK51"/>
<dbReference type="IntAct" id="P9WK51">
    <property type="interactions" value="2"/>
</dbReference>
<dbReference type="MINT" id="P9WK51"/>
<dbReference type="STRING" id="83332.Rv1343c"/>
<dbReference type="PaxDb" id="83332-Rv1343c"/>
<dbReference type="DNASU" id="886852"/>
<dbReference type="GeneID" id="886852"/>
<dbReference type="KEGG" id="mtu:Rv1343c"/>
<dbReference type="KEGG" id="mtv:RVBD_1343c"/>
<dbReference type="TubercuList" id="Rv1343c"/>
<dbReference type="eggNOG" id="COG1566">
    <property type="taxonomic scope" value="Bacteria"/>
</dbReference>
<dbReference type="InParanoid" id="P9WK51"/>
<dbReference type="OrthoDB" id="5187941at2"/>
<dbReference type="PhylomeDB" id="P9WK51"/>
<dbReference type="Proteomes" id="UP000001584">
    <property type="component" value="Chromosome"/>
</dbReference>
<dbReference type="GO" id="GO:0005886">
    <property type="term" value="C:plasma membrane"/>
    <property type="evidence" value="ECO:0007669"/>
    <property type="project" value="UniProtKB-SubCell"/>
</dbReference>
<dbReference type="PROSITE" id="PS51257">
    <property type="entry name" value="PROKAR_LIPOPROTEIN"/>
    <property type="match status" value="1"/>
</dbReference>
<proteinExistence type="inferred from homology"/>
<comment type="subcellular location">
    <subcellularLocation>
        <location evidence="2">Cell membrane</location>
        <topology evidence="2">Lipid-anchor</topology>
    </subcellularLocation>
    <subcellularLocation>
        <location evidence="2">Cell membrane</location>
        <topology evidence="4">Single-pass membrane protein</topology>
    </subcellularLocation>
</comment>
<comment type="similarity">
    <text evidence="4">To M.leprae ML1177.</text>
</comment>
<evidence type="ECO:0000255" key="1"/>
<evidence type="ECO:0000255" key="2">
    <source>
        <dbReference type="PROSITE-ProRule" id="PRU00303"/>
    </source>
</evidence>
<evidence type="ECO:0000256" key="3">
    <source>
        <dbReference type="SAM" id="MobiDB-lite"/>
    </source>
</evidence>
<evidence type="ECO:0000305" key="4"/>
<name>LPRD_MYCTU</name>
<organism>
    <name type="scientific">Mycobacterium tuberculosis (strain ATCC 25618 / H37Rv)</name>
    <dbReference type="NCBI Taxonomy" id="83332"/>
    <lineage>
        <taxon>Bacteria</taxon>
        <taxon>Bacillati</taxon>
        <taxon>Actinomycetota</taxon>
        <taxon>Actinomycetes</taxon>
        <taxon>Mycobacteriales</taxon>
        <taxon>Mycobacteriaceae</taxon>
        <taxon>Mycobacterium</taxon>
        <taxon>Mycobacterium tuberculosis complex</taxon>
    </lineage>
</organism>
<keyword id="KW-1003">Cell membrane</keyword>
<keyword id="KW-0449">Lipoprotein</keyword>
<keyword id="KW-0472">Membrane</keyword>
<keyword id="KW-0564">Palmitate</keyword>
<keyword id="KW-1185">Reference proteome</keyword>
<keyword id="KW-0732">Signal</keyword>
<keyword id="KW-0812">Transmembrane</keyword>
<keyword id="KW-1133">Transmembrane helix</keyword>
<accession>P9WK51</accession>
<accession>L0T6D1</accession>
<accession>Q11013</accession>